<keyword id="KW-0067">ATP-binding</keyword>
<keyword id="KW-0963">Cytoplasm</keyword>
<keyword id="KW-0237">DNA synthesis</keyword>
<keyword id="KW-0418">Kinase</keyword>
<keyword id="KW-0479">Metal-binding</keyword>
<keyword id="KW-0547">Nucleotide-binding</keyword>
<keyword id="KW-0808">Transferase</keyword>
<keyword id="KW-0862">Zinc</keyword>
<reference key="1">
    <citation type="journal article" date="2005" name="Proc. Natl. Acad. Sci. U.S.A.">
        <title>The psychrophilic lifestyle as revealed by the genome sequence of Colwellia psychrerythraea 34H through genomic and proteomic analyses.</title>
        <authorList>
            <person name="Methe B.A."/>
            <person name="Nelson K.E."/>
            <person name="Deming J.W."/>
            <person name="Momen B."/>
            <person name="Melamud E."/>
            <person name="Zhang X."/>
            <person name="Moult J."/>
            <person name="Madupu R."/>
            <person name="Nelson W.C."/>
            <person name="Dodson R.J."/>
            <person name="Brinkac L.M."/>
            <person name="Daugherty S.C."/>
            <person name="Durkin A.S."/>
            <person name="DeBoy R.T."/>
            <person name="Kolonay J.F."/>
            <person name="Sullivan S.A."/>
            <person name="Zhou L."/>
            <person name="Davidsen T.M."/>
            <person name="Wu M."/>
            <person name="Huston A.L."/>
            <person name="Lewis M."/>
            <person name="Weaver B."/>
            <person name="Weidman J.F."/>
            <person name="Khouri H."/>
            <person name="Utterback T.R."/>
            <person name="Feldblyum T.V."/>
            <person name="Fraser C.M."/>
        </authorList>
    </citation>
    <scope>NUCLEOTIDE SEQUENCE [LARGE SCALE GENOMIC DNA]</scope>
    <source>
        <strain>34H / ATCC BAA-681</strain>
    </source>
</reference>
<feature type="chain" id="PRO_0000242790" description="Thymidine kinase">
    <location>
        <begin position="1"/>
        <end position="192"/>
    </location>
</feature>
<feature type="active site" description="Proton acceptor" evidence="1">
    <location>
        <position position="88"/>
    </location>
</feature>
<feature type="binding site" evidence="1">
    <location>
        <begin position="9"/>
        <end position="16"/>
    </location>
    <ligand>
        <name>ATP</name>
        <dbReference type="ChEBI" id="CHEBI:30616"/>
    </ligand>
</feature>
<feature type="binding site" evidence="1">
    <location>
        <begin position="87"/>
        <end position="90"/>
    </location>
    <ligand>
        <name>ATP</name>
        <dbReference type="ChEBI" id="CHEBI:30616"/>
    </ligand>
</feature>
<feature type="binding site" evidence="1">
    <location>
        <position position="145"/>
    </location>
    <ligand>
        <name>Zn(2+)</name>
        <dbReference type="ChEBI" id="CHEBI:29105"/>
    </ligand>
</feature>
<feature type="binding site" evidence="1">
    <location>
        <position position="147"/>
    </location>
    <ligand>
        <name>Zn(2+)</name>
        <dbReference type="ChEBI" id="CHEBI:29105"/>
    </ligand>
</feature>
<feature type="binding site" evidence="1">
    <location>
        <position position="182"/>
    </location>
    <ligand>
        <name>Zn(2+)</name>
        <dbReference type="ChEBI" id="CHEBI:29105"/>
    </ligand>
</feature>
<feature type="binding site" evidence="1">
    <location>
        <position position="185"/>
    </location>
    <ligand>
        <name>Zn(2+)</name>
        <dbReference type="ChEBI" id="CHEBI:29105"/>
    </ligand>
</feature>
<sequence length="192" mass="21671">MAQLYFYYSSMNAGKSTHLLQSSYNYQERGLVTAIYTAKIDDRFAKGKVASRLGIDADAFLFDEKINLFKDVDQKHQAEKIDCVLIDEAQFLSTEQVKQLTDIVDLLHIPVLAYGIRTDFLGQTFSGSAALLAWADKLVELKTICHCGRKANFVIRQDANGKAVQNGEQVEVGGNERYEPLCRAHFKQLVWL</sequence>
<accession>Q483R5</accession>
<evidence type="ECO:0000255" key="1">
    <source>
        <dbReference type="HAMAP-Rule" id="MF_00124"/>
    </source>
</evidence>
<name>KITH_COLP3</name>
<gene>
    <name evidence="1" type="primary">tdk</name>
    <name type="ordered locus">CPS_1971</name>
</gene>
<protein>
    <recommendedName>
        <fullName evidence="1">Thymidine kinase</fullName>
        <ecNumber evidence="1">2.7.1.21</ecNumber>
    </recommendedName>
</protein>
<proteinExistence type="inferred from homology"/>
<comment type="catalytic activity">
    <reaction evidence="1">
        <text>thymidine + ATP = dTMP + ADP + H(+)</text>
        <dbReference type="Rhea" id="RHEA:19129"/>
        <dbReference type="ChEBI" id="CHEBI:15378"/>
        <dbReference type="ChEBI" id="CHEBI:17748"/>
        <dbReference type="ChEBI" id="CHEBI:30616"/>
        <dbReference type="ChEBI" id="CHEBI:63528"/>
        <dbReference type="ChEBI" id="CHEBI:456216"/>
        <dbReference type="EC" id="2.7.1.21"/>
    </reaction>
</comment>
<comment type="subunit">
    <text evidence="1">Homotetramer.</text>
</comment>
<comment type="subcellular location">
    <subcellularLocation>
        <location evidence="1">Cytoplasm</location>
    </subcellularLocation>
</comment>
<comment type="similarity">
    <text evidence="1">Belongs to the thymidine kinase family.</text>
</comment>
<organism>
    <name type="scientific">Colwellia psychrerythraea (strain 34H / ATCC BAA-681)</name>
    <name type="common">Vibrio psychroerythus</name>
    <dbReference type="NCBI Taxonomy" id="167879"/>
    <lineage>
        <taxon>Bacteria</taxon>
        <taxon>Pseudomonadati</taxon>
        <taxon>Pseudomonadota</taxon>
        <taxon>Gammaproteobacteria</taxon>
        <taxon>Alteromonadales</taxon>
        <taxon>Colwelliaceae</taxon>
        <taxon>Colwellia</taxon>
    </lineage>
</organism>
<dbReference type="EC" id="2.7.1.21" evidence="1"/>
<dbReference type="EMBL" id="CP000083">
    <property type="protein sequence ID" value="AAZ25756.1"/>
    <property type="molecule type" value="Genomic_DNA"/>
</dbReference>
<dbReference type="RefSeq" id="WP_011042795.1">
    <property type="nucleotide sequence ID" value="NC_003910.7"/>
</dbReference>
<dbReference type="SMR" id="Q483R5"/>
<dbReference type="STRING" id="167879.CPS_1971"/>
<dbReference type="KEGG" id="cps:CPS_1971"/>
<dbReference type="eggNOG" id="COG1435">
    <property type="taxonomic scope" value="Bacteria"/>
</dbReference>
<dbReference type="HOGENOM" id="CLU_064400_2_1_6"/>
<dbReference type="Proteomes" id="UP000000547">
    <property type="component" value="Chromosome"/>
</dbReference>
<dbReference type="GO" id="GO:0005829">
    <property type="term" value="C:cytosol"/>
    <property type="evidence" value="ECO:0007669"/>
    <property type="project" value="TreeGrafter"/>
</dbReference>
<dbReference type="GO" id="GO:0005524">
    <property type="term" value="F:ATP binding"/>
    <property type="evidence" value="ECO:0007669"/>
    <property type="project" value="UniProtKB-UniRule"/>
</dbReference>
<dbReference type="GO" id="GO:0004797">
    <property type="term" value="F:thymidine kinase activity"/>
    <property type="evidence" value="ECO:0007669"/>
    <property type="project" value="UniProtKB-UniRule"/>
</dbReference>
<dbReference type="GO" id="GO:0008270">
    <property type="term" value="F:zinc ion binding"/>
    <property type="evidence" value="ECO:0007669"/>
    <property type="project" value="UniProtKB-UniRule"/>
</dbReference>
<dbReference type="GO" id="GO:0071897">
    <property type="term" value="P:DNA biosynthetic process"/>
    <property type="evidence" value="ECO:0007669"/>
    <property type="project" value="UniProtKB-KW"/>
</dbReference>
<dbReference type="GO" id="GO:0046104">
    <property type="term" value="P:thymidine metabolic process"/>
    <property type="evidence" value="ECO:0007669"/>
    <property type="project" value="TreeGrafter"/>
</dbReference>
<dbReference type="FunFam" id="3.40.50.300:FF:000323">
    <property type="entry name" value="Thymidine kinase"/>
    <property type="match status" value="1"/>
</dbReference>
<dbReference type="Gene3D" id="3.30.60.20">
    <property type="match status" value="1"/>
</dbReference>
<dbReference type="Gene3D" id="3.40.50.300">
    <property type="entry name" value="P-loop containing nucleotide triphosphate hydrolases"/>
    <property type="match status" value="1"/>
</dbReference>
<dbReference type="HAMAP" id="MF_00124">
    <property type="entry name" value="Thymidine_kinase"/>
    <property type="match status" value="1"/>
</dbReference>
<dbReference type="InterPro" id="IPR027417">
    <property type="entry name" value="P-loop_NTPase"/>
</dbReference>
<dbReference type="InterPro" id="IPR001267">
    <property type="entry name" value="Thymidine_kinase"/>
</dbReference>
<dbReference type="InterPro" id="IPR020633">
    <property type="entry name" value="Thymidine_kinase_CS"/>
</dbReference>
<dbReference type="NCBIfam" id="NF003300">
    <property type="entry name" value="PRK04296.1-5"/>
    <property type="match status" value="1"/>
</dbReference>
<dbReference type="PANTHER" id="PTHR11441">
    <property type="entry name" value="THYMIDINE KINASE"/>
    <property type="match status" value="1"/>
</dbReference>
<dbReference type="PANTHER" id="PTHR11441:SF0">
    <property type="entry name" value="THYMIDINE KINASE, CYTOSOLIC"/>
    <property type="match status" value="1"/>
</dbReference>
<dbReference type="Pfam" id="PF00265">
    <property type="entry name" value="TK"/>
    <property type="match status" value="1"/>
</dbReference>
<dbReference type="PIRSF" id="PIRSF035805">
    <property type="entry name" value="TK_cell"/>
    <property type="match status" value="1"/>
</dbReference>
<dbReference type="SUPFAM" id="SSF57716">
    <property type="entry name" value="Glucocorticoid receptor-like (DNA-binding domain)"/>
    <property type="match status" value="1"/>
</dbReference>
<dbReference type="SUPFAM" id="SSF52540">
    <property type="entry name" value="P-loop containing nucleoside triphosphate hydrolases"/>
    <property type="match status" value="1"/>
</dbReference>
<dbReference type="PROSITE" id="PS00603">
    <property type="entry name" value="TK_CELLULAR_TYPE"/>
    <property type="match status" value="1"/>
</dbReference>